<gene>
    <name type="primary">Nict2</name>
</gene>
<keyword id="KW-0020">Allergen</keyword>
<keyword id="KW-0106">Calcium</keyword>
<keyword id="KW-0479">Metal-binding</keyword>
<keyword id="KW-1185">Reference proteome</keyword>
<keyword id="KW-0677">Repeat</keyword>
<dbReference type="EMBL" id="AB035705">
    <property type="protein sequence ID" value="BAB82486.1"/>
    <property type="molecule type" value="mRNA"/>
</dbReference>
<dbReference type="RefSeq" id="XP_016434228.1">
    <property type="nucleotide sequence ID" value="XM_016578742.1"/>
</dbReference>
<dbReference type="SMR" id="Q8VWY7"/>
<dbReference type="STRING" id="4097.Q8VWY7"/>
<dbReference type="PaxDb" id="4097-Q8VWY7"/>
<dbReference type="KEGG" id="nta:107760658"/>
<dbReference type="OMA" id="TEKVEHD"/>
<dbReference type="OrthoDB" id="26525at2759"/>
<dbReference type="Proteomes" id="UP000084051">
    <property type="component" value="Unplaced"/>
</dbReference>
<dbReference type="GO" id="GO:0005509">
    <property type="term" value="F:calcium ion binding"/>
    <property type="evidence" value="ECO:0000318"/>
    <property type="project" value="GO_Central"/>
</dbReference>
<dbReference type="CDD" id="cd00051">
    <property type="entry name" value="EFh"/>
    <property type="match status" value="1"/>
</dbReference>
<dbReference type="Gene3D" id="1.10.238.10">
    <property type="entry name" value="EF-hand"/>
    <property type="match status" value="1"/>
</dbReference>
<dbReference type="InterPro" id="IPR011992">
    <property type="entry name" value="EF-hand-dom_pair"/>
</dbReference>
<dbReference type="InterPro" id="IPR018247">
    <property type="entry name" value="EF_Hand_1_Ca_BS"/>
</dbReference>
<dbReference type="InterPro" id="IPR002048">
    <property type="entry name" value="EF_hand_dom"/>
</dbReference>
<dbReference type="InterPro" id="IPR039647">
    <property type="entry name" value="EF_hand_pair_protein_CML-like"/>
</dbReference>
<dbReference type="PANTHER" id="PTHR10891">
    <property type="entry name" value="EF-HAND CALCIUM-BINDING DOMAIN CONTAINING PROTEIN"/>
    <property type="match status" value="1"/>
</dbReference>
<dbReference type="Pfam" id="PF13499">
    <property type="entry name" value="EF-hand_7"/>
    <property type="match status" value="1"/>
</dbReference>
<dbReference type="SMART" id="SM00054">
    <property type="entry name" value="EFh"/>
    <property type="match status" value="2"/>
</dbReference>
<dbReference type="SUPFAM" id="SSF47473">
    <property type="entry name" value="EF-hand"/>
    <property type="match status" value="1"/>
</dbReference>
<dbReference type="PROSITE" id="PS00018">
    <property type="entry name" value="EF_HAND_1"/>
    <property type="match status" value="2"/>
</dbReference>
<dbReference type="PROSITE" id="PS50222">
    <property type="entry name" value="EF_HAND_2"/>
    <property type="match status" value="2"/>
</dbReference>
<name>POLC2_TOBAC</name>
<protein>
    <recommendedName>
        <fullName>Polcalcin Nic t 2</fullName>
    </recommendedName>
    <alternativeName>
        <fullName>Calcium-binding pollen allergen Nic t 2</fullName>
    </alternativeName>
    <allergenName>Nic t 2</allergenName>
</protein>
<accession>Q8VWY7</accession>
<sequence length="86" mass="9750">MAEADDPQDIADRERIFKRFDANGDGQISATELGETLQTLGSVTPEEVKYMMDEIDTNKDGFISFQEFIEFARANRGLIRDVAKIF</sequence>
<organism>
    <name type="scientific">Nicotiana tabacum</name>
    <name type="common">Common tobacco</name>
    <dbReference type="NCBI Taxonomy" id="4097"/>
    <lineage>
        <taxon>Eukaryota</taxon>
        <taxon>Viridiplantae</taxon>
        <taxon>Streptophyta</taxon>
        <taxon>Embryophyta</taxon>
        <taxon>Tracheophyta</taxon>
        <taxon>Spermatophyta</taxon>
        <taxon>Magnoliopsida</taxon>
        <taxon>eudicotyledons</taxon>
        <taxon>Gunneridae</taxon>
        <taxon>Pentapetalae</taxon>
        <taxon>asterids</taxon>
        <taxon>lamiids</taxon>
        <taxon>Solanales</taxon>
        <taxon>Solanaceae</taxon>
        <taxon>Nicotianoideae</taxon>
        <taxon>Nicotianeae</taxon>
        <taxon>Nicotiana</taxon>
    </lineage>
</organism>
<reference key="1">
    <citation type="submission" date="1999-12" db="EMBL/GenBank/DDBJ databases">
        <title>Isolation and characterization of pollen-specific calcium-binding protein Nic t 1 and Nic t 2.</title>
        <authorList>
            <person name="Okada T."/>
            <person name="Toriyama K."/>
        </authorList>
    </citation>
    <scope>NUCLEOTIDE SEQUENCE [MRNA]</scope>
    <source>
        <strain>cv. SR1</strain>
        <tissue>Anther</tissue>
        <tissue>Pollen</tissue>
    </source>
</reference>
<comment type="allergen">
    <text>Causes an allergic reaction in human.</text>
</comment>
<feature type="chain" id="PRO_0000073678" description="Polcalcin Nic t 2">
    <location>
        <begin position="1"/>
        <end position="86"/>
    </location>
</feature>
<feature type="domain" description="EF-hand 1" evidence="1">
    <location>
        <begin position="8"/>
        <end position="42"/>
    </location>
</feature>
<feature type="domain" description="EF-hand 2" evidence="1">
    <location>
        <begin position="43"/>
        <end position="78"/>
    </location>
</feature>
<feature type="binding site" evidence="1">
    <location>
        <position position="21"/>
    </location>
    <ligand>
        <name>Ca(2+)</name>
        <dbReference type="ChEBI" id="CHEBI:29108"/>
        <label>1</label>
    </ligand>
</feature>
<feature type="binding site" evidence="1">
    <location>
        <position position="23"/>
    </location>
    <ligand>
        <name>Ca(2+)</name>
        <dbReference type="ChEBI" id="CHEBI:29108"/>
        <label>1</label>
    </ligand>
</feature>
<feature type="binding site" evidence="1">
    <location>
        <position position="25"/>
    </location>
    <ligand>
        <name>Ca(2+)</name>
        <dbReference type="ChEBI" id="CHEBI:29108"/>
        <label>1</label>
    </ligand>
</feature>
<feature type="binding site" evidence="1">
    <location>
        <position position="27"/>
    </location>
    <ligand>
        <name>Ca(2+)</name>
        <dbReference type="ChEBI" id="CHEBI:29108"/>
        <label>1</label>
    </ligand>
</feature>
<feature type="binding site" evidence="1">
    <location>
        <position position="32"/>
    </location>
    <ligand>
        <name>Ca(2+)</name>
        <dbReference type="ChEBI" id="CHEBI:29108"/>
        <label>1</label>
    </ligand>
</feature>
<feature type="binding site" evidence="1">
    <location>
        <position position="56"/>
    </location>
    <ligand>
        <name>Ca(2+)</name>
        <dbReference type="ChEBI" id="CHEBI:29108"/>
        <label>2</label>
    </ligand>
</feature>
<feature type="binding site" evidence="1">
    <location>
        <position position="58"/>
    </location>
    <ligand>
        <name>Ca(2+)</name>
        <dbReference type="ChEBI" id="CHEBI:29108"/>
        <label>2</label>
    </ligand>
</feature>
<feature type="binding site" evidence="1">
    <location>
        <position position="60"/>
    </location>
    <ligand>
        <name>Ca(2+)</name>
        <dbReference type="ChEBI" id="CHEBI:29108"/>
        <label>2</label>
    </ligand>
</feature>
<feature type="binding site" evidence="1">
    <location>
        <position position="67"/>
    </location>
    <ligand>
        <name>Ca(2+)</name>
        <dbReference type="ChEBI" id="CHEBI:29108"/>
        <label>2</label>
    </ligand>
</feature>
<evidence type="ECO:0000255" key="1">
    <source>
        <dbReference type="PROSITE-ProRule" id="PRU00448"/>
    </source>
</evidence>
<proteinExistence type="evidence at protein level"/>